<comment type="function">
    <text evidence="1">Component of SCF(ASK-cullin-F-box) E3 ubiquitin ligase complexes, which may mediate the ubiquitination and subsequent proteasomal degradation of target proteins.</text>
</comment>
<comment type="pathway">
    <text>Protein modification; protein ubiquitination.</text>
</comment>
<comment type="subunit">
    <text evidence="1 2">Part of a SCF (ASK-cullin-F-box) protein ligase complex (By similarity). Interacts with SKP1A/ASK1.</text>
</comment>
<comment type="interaction">
    <interactant intactId="EBI-604272">
        <id>Q9CAN4</id>
    </interactant>
    <interactant intactId="EBI-401198">
        <id>Q9SKK0</id>
        <label>EBF1</label>
    </interactant>
    <organismsDiffer>false</organismsDiffer>
    <experiments>4</experiments>
</comment>
<comment type="subcellular location">
    <subcellularLocation>
        <location evidence="1">Nucleus</location>
    </subcellularLocation>
</comment>
<comment type="domain">
    <text evidence="1">The F-box is necessary for the interaction with ASK proteins.</text>
</comment>
<organism>
    <name type="scientific">Arabidopsis thaliana</name>
    <name type="common">Mouse-ear cress</name>
    <dbReference type="NCBI Taxonomy" id="3702"/>
    <lineage>
        <taxon>Eukaryota</taxon>
        <taxon>Viridiplantae</taxon>
        <taxon>Streptophyta</taxon>
        <taxon>Embryophyta</taxon>
        <taxon>Tracheophyta</taxon>
        <taxon>Spermatophyta</taxon>
        <taxon>Magnoliopsida</taxon>
        <taxon>eudicotyledons</taxon>
        <taxon>Gunneridae</taxon>
        <taxon>Pentapetalae</taxon>
        <taxon>rosids</taxon>
        <taxon>malvids</taxon>
        <taxon>Brassicales</taxon>
        <taxon>Brassicaceae</taxon>
        <taxon>Camelineae</taxon>
        <taxon>Arabidopsis</taxon>
    </lineage>
</organism>
<accession>Q9CAN4</accession>
<accession>Q84WN6</accession>
<feature type="chain" id="PRO_0000272206" description="F-box protein PP2-A11">
    <location>
        <begin position="1"/>
        <end position="289"/>
    </location>
</feature>
<feature type="domain" description="F-box">
    <location>
        <begin position="23"/>
        <end position="69"/>
    </location>
</feature>
<gene>
    <name type="primary">PP2A11</name>
    <name type="synonym">SKIP10</name>
    <name type="ordered locus">At1g63090</name>
    <name type="ORF">F16M19.16</name>
</gene>
<keyword id="KW-0539">Nucleus</keyword>
<keyword id="KW-1185">Reference proteome</keyword>
<keyword id="KW-0833">Ubl conjugation pathway</keyword>
<name>P2A11_ARATH</name>
<reference key="1">
    <citation type="journal article" date="2000" name="Nature">
        <title>Sequence and analysis of chromosome 1 of the plant Arabidopsis thaliana.</title>
        <authorList>
            <person name="Theologis A."/>
            <person name="Ecker J.R."/>
            <person name="Palm C.J."/>
            <person name="Federspiel N.A."/>
            <person name="Kaul S."/>
            <person name="White O."/>
            <person name="Alonso J."/>
            <person name="Altafi H."/>
            <person name="Araujo R."/>
            <person name="Bowman C.L."/>
            <person name="Brooks S.Y."/>
            <person name="Buehler E."/>
            <person name="Chan A."/>
            <person name="Chao Q."/>
            <person name="Chen H."/>
            <person name="Cheuk R.F."/>
            <person name="Chin C.W."/>
            <person name="Chung M.K."/>
            <person name="Conn L."/>
            <person name="Conway A.B."/>
            <person name="Conway A.R."/>
            <person name="Creasy T.H."/>
            <person name="Dewar K."/>
            <person name="Dunn P."/>
            <person name="Etgu P."/>
            <person name="Feldblyum T.V."/>
            <person name="Feng J.-D."/>
            <person name="Fong B."/>
            <person name="Fujii C.Y."/>
            <person name="Gill J.E."/>
            <person name="Goldsmith A.D."/>
            <person name="Haas B."/>
            <person name="Hansen N.F."/>
            <person name="Hughes B."/>
            <person name="Huizar L."/>
            <person name="Hunter J.L."/>
            <person name="Jenkins J."/>
            <person name="Johnson-Hopson C."/>
            <person name="Khan S."/>
            <person name="Khaykin E."/>
            <person name="Kim C.J."/>
            <person name="Koo H.L."/>
            <person name="Kremenetskaia I."/>
            <person name="Kurtz D.B."/>
            <person name="Kwan A."/>
            <person name="Lam B."/>
            <person name="Langin-Hooper S."/>
            <person name="Lee A."/>
            <person name="Lee J.M."/>
            <person name="Lenz C.A."/>
            <person name="Li J.H."/>
            <person name="Li Y.-P."/>
            <person name="Lin X."/>
            <person name="Liu S.X."/>
            <person name="Liu Z.A."/>
            <person name="Luros J.S."/>
            <person name="Maiti R."/>
            <person name="Marziali A."/>
            <person name="Militscher J."/>
            <person name="Miranda M."/>
            <person name="Nguyen M."/>
            <person name="Nierman W.C."/>
            <person name="Osborne B.I."/>
            <person name="Pai G."/>
            <person name="Peterson J."/>
            <person name="Pham P.K."/>
            <person name="Rizzo M."/>
            <person name="Rooney T."/>
            <person name="Rowley D."/>
            <person name="Sakano H."/>
            <person name="Salzberg S.L."/>
            <person name="Schwartz J.R."/>
            <person name="Shinn P."/>
            <person name="Southwick A.M."/>
            <person name="Sun H."/>
            <person name="Tallon L.J."/>
            <person name="Tambunga G."/>
            <person name="Toriumi M.J."/>
            <person name="Town C.D."/>
            <person name="Utterback T."/>
            <person name="Van Aken S."/>
            <person name="Vaysberg M."/>
            <person name="Vysotskaia V.S."/>
            <person name="Walker M."/>
            <person name="Wu D."/>
            <person name="Yu G."/>
            <person name="Fraser C.M."/>
            <person name="Venter J.C."/>
            <person name="Davis R.W."/>
        </authorList>
    </citation>
    <scope>NUCLEOTIDE SEQUENCE [LARGE SCALE GENOMIC DNA]</scope>
    <source>
        <strain>cv. Columbia</strain>
    </source>
</reference>
<reference key="2">
    <citation type="journal article" date="2017" name="Plant J.">
        <title>Araport11: a complete reannotation of the Arabidopsis thaliana reference genome.</title>
        <authorList>
            <person name="Cheng C.Y."/>
            <person name="Krishnakumar V."/>
            <person name="Chan A.P."/>
            <person name="Thibaud-Nissen F."/>
            <person name="Schobel S."/>
            <person name="Town C.D."/>
        </authorList>
    </citation>
    <scope>GENOME REANNOTATION</scope>
    <source>
        <strain>cv. Columbia</strain>
    </source>
</reference>
<reference key="3">
    <citation type="submission" date="2006-03" db="EMBL/GenBank/DDBJ databases">
        <title>Arabidopsis ORF clones.</title>
        <authorList>
            <person name="Shinn P."/>
            <person name="Chen H."/>
            <person name="Kim C.J."/>
            <person name="Ecker J.R."/>
        </authorList>
    </citation>
    <scope>NUCLEOTIDE SEQUENCE [LARGE SCALE MRNA]</scope>
    <source>
        <strain>cv. Columbia</strain>
    </source>
</reference>
<reference key="4">
    <citation type="submission" date="2006-07" db="EMBL/GenBank/DDBJ databases">
        <title>Large-scale analysis of RIKEN Arabidopsis full-length (RAFL) cDNAs.</title>
        <authorList>
            <person name="Totoki Y."/>
            <person name="Seki M."/>
            <person name="Ishida J."/>
            <person name="Nakajima M."/>
            <person name="Enju A."/>
            <person name="Kamiya A."/>
            <person name="Narusaka M."/>
            <person name="Shin-i T."/>
            <person name="Nakagawa M."/>
            <person name="Sakamoto N."/>
            <person name="Oishi K."/>
            <person name="Kohara Y."/>
            <person name="Kobayashi M."/>
            <person name="Toyoda A."/>
            <person name="Sakaki Y."/>
            <person name="Sakurai T."/>
            <person name="Iida K."/>
            <person name="Akiyama K."/>
            <person name="Satou M."/>
            <person name="Toyoda T."/>
            <person name="Konagaya A."/>
            <person name="Carninci P."/>
            <person name="Kawai J."/>
            <person name="Hayashizaki Y."/>
            <person name="Shinozaki K."/>
        </authorList>
    </citation>
    <scope>NUCLEOTIDE SEQUENCE [LARGE SCALE MRNA]</scope>
    <source>
        <strain>cv. Columbia</strain>
    </source>
</reference>
<reference key="5">
    <citation type="journal article" date="2003" name="Science">
        <title>Empirical analysis of transcriptional activity in the Arabidopsis genome.</title>
        <authorList>
            <person name="Yamada K."/>
            <person name="Lim J."/>
            <person name="Dale J.M."/>
            <person name="Chen H."/>
            <person name="Shinn P."/>
            <person name="Palm C.J."/>
            <person name="Southwick A.M."/>
            <person name="Wu H.C."/>
            <person name="Kim C.J."/>
            <person name="Nguyen M."/>
            <person name="Pham P.K."/>
            <person name="Cheuk R.F."/>
            <person name="Karlin-Newmann G."/>
            <person name="Liu S.X."/>
            <person name="Lam B."/>
            <person name="Sakano H."/>
            <person name="Wu T."/>
            <person name="Yu G."/>
            <person name="Miranda M."/>
            <person name="Quach H.L."/>
            <person name="Tripp M."/>
            <person name="Chang C.H."/>
            <person name="Lee J.M."/>
            <person name="Toriumi M.J."/>
            <person name="Chan M.M."/>
            <person name="Tang C.C."/>
            <person name="Onodera C.S."/>
            <person name="Deng J.M."/>
            <person name="Akiyama K."/>
            <person name="Ansari Y."/>
            <person name="Arakawa T."/>
            <person name="Banh J."/>
            <person name="Banno F."/>
            <person name="Bowser L."/>
            <person name="Brooks S.Y."/>
            <person name="Carninci P."/>
            <person name="Chao Q."/>
            <person name="Choy N."/>
            <person name="Enju A."/>
            <person name="Goldsmith A.D."/>
            <person name="Gurjal M."/>
            <person name="Hansen N.F."/>
            <person name="Hayashizaki Y."/>
            <person name="Johnson-Hopson C."/>
            <person name="Hsuan V.W."/>
            <person name="Iida K."/>
            <person name="Karnes M."/>
            <person name="Khan S."/>
            <person name="Koesema E."/>
            <person name="Ishida J."/>
            <person name="Jiang P.X."/>
            <person name="Jones T."/>
            <person name="Kawai J."/>
            <person name="Kamiya A."/>
            <person name="Meyers C."/>
            <person name="Nakajima M."/>
            <person name="Narusaka M."/>
            <person name="Seki M."/>
            <person name="Sakurai T."/>
            <person name="Satou M."/>
            <person name="Tamse R."/>
            <person name="Vaysberg M."/>
            <person name="Wallender E.K."/>
            <person name="Wong C."/>
            <person name="Yamamura Y."/>
            <person name="Yuan S."/>
            <person name="Shinozaki K."/>
            <person name="Davis R.W."/>
            <person name="Theologis A."/>
            <person name="Ecker J.R."/>
        </authorList>
    </citation>
    <scope>NUCLEOTIDE SEQUENCE [LARGE SCALE MRNA]</scope>
    <source>
        <strain>cv. Columbia</strain>
    </source>
</reference>
<reference key="6">
    <citation type="journal article" date="2003" name="Plant J.">
        <title>Protein interaction analysis of SCF ubiquitin E3 ligase subunits from Arabidopsis.</title>
        <authorList>
            <person name="Risseeuw E.P."/>
            <person name="Daskalchuk T.E."/>
            <person name="Banks T.W."/>
            <person name="Liu E."/>
            <person name="Cotelesage J."/>
            <person name="Hellmann H."/>
            <person name="Estelle M."/>
            <person name="Somers D.E."/>
            <person name="Crosby W.L."/>
        </authorList>
    </citation>
    <scope>INTERACTION WITH SKP1A/ASK1</scope>
</reference>
<reference key="7">
    <citation type="journal article" date="2003" name="Plant Physiol.">
        <title>Diversity of the superfamily of phloem lectins (phloem protein 2) in angiosperms.</title>
        <authorList>
            <person name="Dinant S."/>
            <person name="Clark A.M."/>
            <person name="Zhu Y."/>
            <person name="Vilaine F."/>
            <person name="Palauqui J.-C."/>
            <person name="Kusiak C."/>
            <person name="Thompson G.A."/>
        </authorList>
    </citation>
    <scope>GENE FAMILY</scope>
    <scope>NOMENCLATURE</scope>
</reference>
<dbReference type="EMBL" id="AC010795">
    <property type="protein sequence ID" value="AAG51598.1"/>
    <property type="molecule type" value="Genomic_DNA"/>
</dbReference>
<dbReference type="EMBL" id="CP002684">
    <property type="protein sequence ID" value="AEE34052.1"/>
    <property type="molecule type" value="Genomic_DNA"/>
</dbReference>
<dbReference type="EMBL" id="BT024709">
    <property type="protein sequence ID" value="ABD59047.1"/>
    <property type="molecule type" value="mRNA"/>
</dbReference>
<dbReference type="EMBL" id="AK228787">
    <property type="protein sequence ID" value="BAF00684.1"/>
    <property type="molecule type" value="mRNA"/>
</dbReference>
<dbReference type="EMBL" id="BT002971">
    <property type="protein sequence ID" value="AAO22780.1"/>
    <property type="molecule type" value="mRNA"/>
</dbReference>
<dbReference type="PIR" id="C96656">
    <property type="entry name" value="C96656"/>
</dbReference>
<dbReference type="RefSeq" id="NP_176497.1">
    <property type="nucleotide sequence ID" value="NM_104987.5"/>
</dbReference>
<dbReference type="SMR" id="Q9CAN4"/>
<dbReference type="BioGRID" id="27833">
    <property type="interactions" value="5"/>
</dbReference>
<dbReference type="FunCoup" id="Q9CAN4">
    <property type="interactions" value="40"/>
</dbReference>
<dbReference type="IntAct" id="Q9CAN4">
    <property type="interactions" value="3"/>
</dbReference>
<dbReference type="STRING" id="3702.Q9CAN4"/>
<dbReference type="iPTMnet" id="Q9CAN4"/>
<dbReference type="PaxDb" id="3702-AT1G63090.1"/>
<dbReference type="EnsemblPlants" id="AT1G63090.1">
    <property type="protein sequence ID" value="AT1G63090.1"/>
    <property type="gene ID" value="AT1G63090"/>
</dbReference>
<dbReference type="GeneID" id="842612"/>
<dbReference type="Gramene" id="AT1G63090.1">
    <property type="protein sequence ID" value="AT1G63090.1"/>
    <property type="gene ID" value="AT1G63090"/>
</dbReference>
<dbReference type="KEGG" id="ath:AT1G63090"/>
<dbReference type="Araport" id="AT1G63090"/>
<dbReference type="TAIR" id="AT1G63090">
    <property type="gene designation" value="PP2-A11"/>
</dbReference>
<dbReference type="eggNOG" id="ENOG502QPMH">
    <property type="taxonomic scope" value="Eukaryota"/>
</dbReference>
<dbReference type="HOGENOM" id="CLU_050973_1_0_1"/>
<dbReference type="InParanoid" id="Q9CAN4"/>
<dbReference type="OMA" id="NWSHYHA"/>
<dbReference type="PhylomeDB" id="Q9CAN4"/>
<dbReference type="UniPathway" id="UPA00143"/>
<dbReference type="PRO" id="PR:Q9CAN4"/>
<dbReference type="Proteomes" id="UP000006548">
    <property type="component" value="Chromosome 1"/>
</dbReference>
<dbReference type="ExpressionAtlas" id="Q9CAN4">
    <property type="expression patterns" value="baseline and differential"/>
</dbReference>
<dbReference type="GO" id="GO:0005634">
    <property type="term" value="C:nucleus"/>
    <property type="evidence" value="ECO:0007669"/>
    <property type="project" value="UniProtKB-SubCell"/>
</dbReference>
<dbReference type="GO" id="GO:0030246">
    <property type="term" value="F:carbohydrate binding"/>
    <property type="evidence" value="ECO:0000250"/>
    <property type="project" value="TAIR"/>
</dbReference>
<dbReference type="GO" id="GO:0071456">
    <property type="term" value="P:cellular response to hypoxia"/>
    <property type="evidence" value="ECO:0007007"/>
    <property type="project" value="TAIR"/>
</dbReference>
<dbReference type="GO" id="GO:0016567">
    <property type="term" value="P:protein ubiquitination"/>
    <property type="evidence" value="ECO:0007669"/>
    <property type="project" value="UniProtKB-UniPathway"/>
</dbReference>
<dbReference type="CDD" id="cd22162">
    <property type="entry name" value="F-box_AtSKIP3-like"/>
    <property type="match status" value="1"/>
</dbReference>
<dbReference type="InterPro" id="IPR036047">
    <property type="entry name" value="F-box-like_dom_sf"/>
</dbReference>
<dbReference type="InterPro" id="IPR001810">
    <property type="entry name" value="F-box_dom"/>
</dbReference>
<dbReference type="InterPro" id="IPR025886">
    <property type="entry name" value="PP2-like"/>
</dbReference>
<dbReference type="PANTHER" id="PTHR31960:SF16">
    <property type="entry name" value="F-BOX PROTEIN PP2-A11"/>
    <property type="match status" value="1"/>
</dbReference>
<dbReference type="PANTHER" id="PTHR31960">
    <property type="entry name" value="F-BOX PROTEIN PP2-A15"/>
    <property type="match status" value="1"/>
</dbReference>
<dbReference type="Pfam" id="PF00646">
    <property type="entry name" value="F-box"/>
    <property type="match status" value="1"/>
</dbReference>
<dbReference type="Pfam" id="PF14299">
    <property type="entry name" value="PP2"/>
    <property type="match status" value="1"/>
</dbReference>
<dbReference type="SUPFAM" id="SSF81383">
    <property type="entry name" value="F-box domain"/>
    <property type="match status" value="1"/>
</dbReference>
<sequence length="289" mass="32555">MGSGFSLFQKNLSSCYGDRDLLQPGLGDLPESCVALILQNLDPVEICRFSKLNTAFHGASWADFVWESKLPPDYKLILEKILGSFPDNLRKRDIFTFLSRVNSFDEGNKKAWVDKRTGGLCLCTSAKGLSITGIDDRRYWSHIPSDDSRFASVAYVQQIWWFQVDGEIDFPFPAGTYSVYFRLQLGKPGKRFGWKVVDTEQVHGWNIKPVRFQLSTEDGQHSSSQCMLTEAGNWSHYHAGDFVVGKSKSSSTKIKFSMTQIDCTHTKGGLCVDSVVVYPSSCKDRLMQI</sequence>
<proteinExistence type="evidence at protein level"/>
<evidence type="ECO:0000250" key="1"/>
<evidence type="ECO:0000269" key="2">
    <source>
    </source>
</evidence>
<protein>
    <recommendedName>
        <fullName>F-box protein PP2-A11</fullName>
    </recommendedName>
    <alternativeName>
        <fullName>Protein PHLOEM PROTEIN 2-LIKE A11</fullName>
        <shortName>AtPP2-A11</shortName>
    </alternativeName>
    <alternativeName>
        <fullName>SKP1-interacting partner 10</fullName>
    </alternativeName>
</protein>